<feature type="chain" id="PRO_0000265044" description="Putative 3-methyladenine DNA glycosylase">
    <location>
        <begin position="1"/>
        <end position="191"/>
    </location>
</feature>
<gene>
    <name type="ordered locus">PPA2247</name>
</gene>
<dbReference type="EC" id="3.2.2.-" evidence="1"/>
<dbReference type="EMBL" id="AE017283">
    <property type="protein sequence ID" value="AAT83950.1"/>
    <property type="molecule type" value="Genomic_DNA"/>
</dbReference>
<dbReference type="RefSeq" id="WP_002516444.1">
    <property type="nucleotide sequence ID" value="NZ_CP025935.1"/>
</dbReference>
<dbReference type="SMR" id="Q6A5L3"/>
<dbReference type="EnsemblBacteria" id="AAT83950">
    <property type="protein sequence ID" value="AAT83950"/>
    <property type="gene ID" value="PPA2247"/>
</dbReference>
<dbReference type="KEGG" id="pac:PPA2247"/>
<dbReference type="eggNOG" id="COG2094">
    <property type="taxonomic scope" value="Bacteria"/>
</dbReference>
<dbReference type="HOGENOM" id="CLU_060471_3_0_11"/>
<dbReference type="Proteomes" id="UP000000603">
    <property type="component" value="Chromosome"/>
</dbReference>
<dbReference type="GO" id="GO:0003905">
    <property type="term" value="F:alkylbase DNA N-glycosylase activity"/>
    <property type="evidence" value="ECO:0007669"/>
    <property type="project" value="InterPro"/>
</dbReference>
<dbReference type="GO" id="GO:0003677">
    <property type="term" value="F:DNA binding"/>
    <property type="evidence" value="ECO:0007669"/>
    <property type="project" value="InterPro"/>
</dbReference>
<dbReference type="GO" id="GO:0006284">
    <property type="term" value="P:base-excision repair"/>
    <property type="evidence" value="ECO:0007669"/>
    <property type="project" value="InterPro"/>
</dbReference>
<dbReference type="CDD" id="cd00540">
    <property type="entry name" value="AAG"/>
    <property type="match status" value="1"/>
</dbReference>
<dbReference type="Gene3D" id="3.10.300.10">
    <property type="entry name" value="Methylpurine-DNA glycosylase (MPG)"/>
    <property type="match status" value="1"/>
</dbReference>
<dbReference type="HAMAP" id="MF_00527">
    <property type="entry name" value="3MGH"/>
    <property type="match status" value="1"/>
</dbReference>
<dbReference type="InterPro" id="IPR011034">
    <property type="entry name" value="Formyl_transferase-like_C_sf"/>
</dbReference>
<dbReference type="InterPro" id="IPR003180">
    <property type="entry name" value="MPG"/>
</dbReference>
<dbReference type="InterPro" id="IPR036995">
    <property type="entry name" value="MPG_sf"/>
</dbReference>
<dbReference type="NCBIfam" id="TIGR00567">
    <property type="entry name" value="3mg"/>
    <property type="match status" value="1"/>
</dbReference>
<dbReference type="NCBIfam" id="NF002003">
    <property type="entry name" value="PRK00802.1-3"/>
    <property type="match status" value="1"/>
</dbReference>
<dbReference type="PANTHER" id="PTHR10429">
    <property type="entry name" value="DNA-3-METHYLADENINE GLYCOSYLASE"/>
    <property type="match status" value="1"/>
</dbReference>
<dbReference type="PANTHER" id="PTHR10429:SF0">
    <property type="entry name" value="DNA-3-METHYLADENINE GLYCOSYLASE"/>
    <property type="match status" value="1"/>
</dbReference>
<dbReference type="Pfam" id="PF02245">
    <property type="entry name" value="Pur_DNA_glyco"/>
    <property type="match status" value="1"/>
</dbReference>
<dbReference type="SUPFAM" id="SSF50486">
    <property type="entry name" value="FMT C-terminal domain-like"/>
    <property type="match status" value="1"/>
</dbReference>
<organism>
    <name type="scientific">Cutibacterium acnes (strain DSM 16379 / KPA171202)</name>
    <name type="common">Propionibacterium acnes</name>
    <dbReference type="NCBI Taxonomy" id="267747"/>
    <lineage>
        <taxon>Bacteria</taxon>
        <taxon>Bacillati</taxon>
        <taxon>Actinomycetota</taxon>
        <taxon>Actinomycetes</taxon>
        <taxon>Propionibacteriales</taxon>
        <taxon>Propionibacteriaceae</taxon>
        <taxon>Cutibacterium</taxon>
    </lineage>
</organism>
<proteinExistence type="inferred from homology"/>
<comment type="similarity">
    <text evidence="1">Belongs to the DNA glycosylase MPG family.</text>
</comment>
<accession>Q6A5L3</accession>
<reference key="1">
    <citation type="journal article" date="2004" name="Science">
        <title>The complete genome sequence of Propionibacterium acnes, a commensal of human skin.</title>
        <authorList>
            <person name="Brueggemann H."/>
            <person name="Henne A."/>
            <person name="Hoster F."/>
            <person name="Liesegang H."/>
            <person name="Wiezer A."/>
            <person name="Strittmatter A."/>
            <person name="Hujer S."/>
            <person name="Duerre P."/>
            <person name="Gottschalk G."/>
        </authorList>
    </citation>
    <scope>NUCLEOTIDE SEQUENCE [LARGE SCALE GENOMIC DNA]</scope>
    <source>
        <strain>DSM 16379 / KPA171202</strain>
    </source>
</reference>
<keyword id="KW-0227">DNA damage</keyword>
<keyword id="KW-0234">DNA repair</keyword>
<keyword id="KW-0378">Hydrolase</keyword>
<sequence>MIDLSAPAIEVAPLLLGATIWRGPVGIRLTEVEAYMGLDDPASHAFRGPTPRARVMFGPPSHIYVYLSYGMHRCVNLVCSPDGEASAVLLRGGQVIAGHDDARRRRGNVAENRLACGPGNMGSALGASLEESGNPVSIIGNGAISALGWRLEPAPEIAEFRQGPRVGISRNIDAPWRWWIPQDPTVSGPRT</sequence>
<evidence type="ECO:0000255" key="1">
    <source>
        <dbReference type="HAMAP-Rule" id="MF_00527"/>
    </source>
</evidence>
<name>3MGH_CUTAK</name>
<protein>
    <recommendedName>
        <fullName evidence="1">Putative 3-methyladenine DNA glycosylase</fullName>
        <ecNumber evidence="1">3.2.2.-</ecNumber>
    </recommendedName>
</protein>